<sequence>MTTVAVWVGVALIGGVGSVLRFVVDGAVARRASRPFPLGTLVVNLSGAALLGFLGGLALSREAALLAGTAFVGAYTTFSTWMLETQRLGEERQLRAALANIVVSVVLGGAAAFIGQQLAQLV</sequence>
<gene>
    <name evidence="1" type="primary">fluC2</name>
    <name evidence="1" type="synonym">crcB2</name>
    <name type="ordered locus">MAP_3148</name>
</gene>
<feature type="chain" id="PRO_0000110136" description="Fluoride-specific ion channel FluC 2">
    <location>
        <begin position="1"/>
        <end position="122"/>
    </location>
</feature>
<feature type="transmembrane region" description="Helical" evidence="1">
    <location>
        <begin position="4"/>
        <end position="24"/>
    </location>
</feature>
<feature type="transmembrane region" description="Helical" evidence="1">
    <location>
        <begin position="38"/>
        <end position="58"/>
    </location>
</feature>
<feature type="transmembrane region" description="Helical" evidence="1">
    <location>
        <begin position="63"/>
        <end position="83"/>
    </location>
</feature>
<feature type="transmembrane region" description="Helical" evidence="1">
    <location>
        <begin position="96"/>
        <end position="116"/>
    </location>
</feature>
<feature type="binding site" evidence="1">
    <location>
        <position position="73"/>
    </location>
    <ligand>
        <name>Na(+)</name>
        <dbReference type="ChEBI" id="CHEBI:29101"/>
        <note>structural</note>
    </ligand>
</feature>
<feature type="binding site" evidence="1">
    <location>
        <position position="76"/>
    </location>
    <ligand>
        <name>Na(+)</name>
        <dbReference type="ChEBI" id="CHEBI:29101"/>
        <note>structural</note>
    </ligand>
</feature>
<evidence type="ECO:0000255" key="1">
    <source>
        <dbReference type="HAMAP-Rule" id="MF_00454"/>
    </source>
</evidence>
<keyword id="KW-1003">Cell membrane</keyword>
<keyword id="KW-0407">Ion channel</keyword>
<keyword id="KW-0406">Ion transport</keyword>
<keyword id="KW-0472">Membrane</keyword>
<keyword id="KW-0479">Metal-binding</keyword>
<keyword id="KW-1185">Reference proteome</keyword>
<keyword id="KW-0915">Sodium</keyword>
<keyword id="KW-0812">Transmembrane</keyword>
<keyword id="KW-1133">Transmembrane helix</keyword>
<keyword id="KW-0813">Transport</keyword>
<protein>
    <recommendedName>
        <fullName evidence="1">Fluoride-specific ion channel FluC 2</fullName>
    </recommendedName>
</protein>
<dbReference type="EMBL" id="AE016958">
    <property type="protein sequence ID" value="AAS05696.1"/>
    <property type="molecule type" value="Genomic_DNA"/>
</dbReference>
<dbReference type="SMR" id="P61393"/>
<dbReference type="STRING" id="262316.MAP_3148"/>
<dbReference type="KEGG" id="mpa:MAP_3148"/>
<dbReference type="PATRIC" id="fig|262316.17.peg.3342"/>
<dbReference type="eggNOG" id="COG0239">
    <property type="taxonomic scope" value="Bacteria"/>
</dbReference>
<dbReference type="HOGENOM" id="CLU_114342_2_3_11"/>
<dbReference type="Proteomes" id="UP000000580">
    <property type="component" value="Chromosome"/>
</dbReference>
<dbReference type="GO" id="GO:0005886">
    <property type="term" value="C:plasma membrane"/>
    <property type="evidence" value="ECO:0007669"/>
    <property type="project" value="UniProtKB-SubCell"/>
</dbReference>
<dbReference type="GO" id="GO:0062054">
    <property type="term" value="F:fluoride channel activity"/>
    <property type="evidence" value="ECO:0007669"/>
    <property type="project" value="UniProtKB-UniRule"/>
</dbReference>
<dbReference type="GO" id="GO:0046872">
    <property type="term" value="F:metal ion binding"/>
    <property type="evidence" value="ECO:0007669"/>
    <property type="project" value="UniProtKB-KW"/>
</dbReference>
<dbReference type="GO" id="GO:0140114">
    <property type="term" value="P:cellular detoxification of fluoride"/>
    <property type="evidence" value="ECO:0007669"/>
    <property type="project" value="UniProtKB-UniRule"/>
</dbReference>
<dbReference type="HAMAP" id="MF_00454">
    <property type="entry name" value="FluC"/>
    <property type="match status" value="1"/>
</dbReference>
<dbReference type="InterPro" id="IPR003691">
    <property type="entry name" value="FluC"/>
</dbReference>
<dbReference type="NCBIfam" id="NF010824">
    <property type="entry name" value="PRK14228.1"/>
    <property type="match status" value="1"/>
</dbReference>
<dbReference type="PANTHER" id="PTHR28259">
    <property type="entry name" value="FLUORIDE EXPORT PROTEIN 1-RELATED"/>
    <property type="match status" value="1"/>
</dbReference>
<dbReference type="PANTHER" id="PTHR28259:SF1">
    <property type="entry name" value="FLUORIDE EXPORT PROTEIN 1-RELATED"/>
    <property type="match status" value="1"/>
</dbReference>
<dbReference type="Pfam" id="PF02537">
    <property type="entry name" value="CRCB"/>
    <property type="match status" value="1"/>
</dbReference>
<organism>
    <name type="scientific">Mycolicibacterium paratuberculosis (strain ATCC BAA-968 / K-10)</name>
    <name type="common">Mycobacterium paratuberculosis</name>
    <dbReference type="NCBI Taxonomy" id="262316"/>
    <lineage>
        <taxon>Bacteria</taxon>
        <taxon>Bacillati</taxon>
        <taxon>Actinomycetota</taxon>
        <taxon>Actinomycetes</taxon>
        <taxon>Mycobacteriales</taxon>
        <taxon>Mycobacteriaceae</taxon>
        <taxon>Mycobacterium</taxon>
        <taxon>Mycobacterium avium complex (MAC)</taxon>
    </lineage>
</organism>
<accession>P61393</accession>
<reference key="1">
    <citation type="journal article" date="2005" name="Proc. Natl. Acad. Sci. U.S.A.">
        <title>The complete genome sequence of Mycobacterium avium subspecies paratuberculosis.</title>
        <authorList>
            <person name="Li L."/>
            <person name="Bannantine J.P."/>
            <person name="Zhang Q."/>
            <person name="Amonsin A."/>
            <person name="May B.J."/>
            <person name="Alt D."/>
            <person name="Banerji N."/>
            <person name="Kanjilal S."/>
            <person name="Kapur V."/>
        </authorList>
    </citation>
    <scope>NUCLEOTIDE SEQUENCE [LARGE SCALE GENOMIC DNA]</scope>
    <source>
        <strain>ATCC BAA-968 / K-10</strain>
    </source>
</reference>
<name>FLUC2_MYCPA</name>
<proteinExistence type="inferred from homology"/>
<comment type="function">
    <text evidence="1">Fluoride-specific ion channel. Important for reducing fluoride concentration in the cell, thus reducing its toxicity.</text>
</comment>
<comment type="catalytic activity">
    <reaction evidence="1">
        <text>fluoride(in) = fluoride(out)</text>
        <dbReference type="Rhea" id="RHEA:76159"/>
        <dbReference type="ChEBI" id="CHEBI:17051"/>
    </reaction>
    <physiologicalReaction direction="left-to-right" evidence="1">
        <dbReference type="Rhea" id="RHEA:76160"/>
    </physiologicalReaction>
</comment>
<comment type="activity regulation">
    <text evidence="1">Na(+) is not transported, but it plays an essential structural role and its presence is essential for fluoride channel function.</text>
</comment>
<comment type="subcellular location">
    <subcellularLocation>
        <location evidence="1">Cell membrane</location>
        <topology evidence="1">Multi-pass membrane protein</topology>
    </subcellularLocation>
</comment>
<comment type="similarity">
    <text evidence="1">Belongs to the fluoride channel Fluc/FEX (TC 1.A.43) family.</text>
</comment>